<reference key="1">
    <citation type="submission" date="2008-04" db="EMBL/GenBank/DDBJ databases">
        <title>Complete sequence of chromosome 1 of Burkholderia ambifaria MC40-6.</title>
        <authorList>
            <person name="Copeland A."/>
            <person name="Lucas S."/>
            <person name="Lapidus A."/>
            <person name="Glavina del Rio T."/>
            <person name="Dalin E."/>
            <person name="Tice H."/>
            <person name="Pitluck S."/>
            <person name="Chain P."/>
            <person name="Malfatti S."/>
            <person name="Shin M."/>
            <person name="Vergez L."/>
            <person name="Lang D."/>
            <person name="Schmutz J."/>
            <person name="Larimer F."/>
            <person name="Land M."/>
            <person name="Hauser L."/>
            <person name="Kyrpides N."/>
            <person name="Lykidis A."/>
            <person name="Ramette A."/>
            <person name="Konstantinidis K."/>
            <person name="Tiedje J."/>
            <person name="Richardson P."/>
        </authorList>
    </citation>
    <scope>NUCLEOTIDE SEQUENCE [LARGE SCALE GENOMIC DNA]</scope>
    <source>
        <strain>MC40-6</strain>
    </source>
</reference>
<evidence type="ECO:0000255" key="1">
    <source>
        <dbReference type="HAMAP-Rule" id="MF_00530"/>
    </source>
</evidence>
<gene>
    <name evidence="1" type="primary">atpC</name>
    <name type="ordered locus">BamMC406_0107</name>
</gene>
<protein>
    <recommendedName>
        <fullName evidence="1">ATP synthase epsilon chain</fullName>
    </recommendedName>
    <alternativeName>
        <fullName evidence="1">ATP synthase F1 sector epsilon subunit</fullName>
    </alternativeName>
    <alternativeName>
        <fullName evidence="1">F-ATPase epsilon subunit</fullName>
    </alternativeName>
</protein>
<proteinExistence type="inferred from homology"/>
<accession>B1YQL5</accession>
<organism>
    <name type="scientific">Burkholderia ambifaria (strain MC40-6)</name>
    <dbReference type="NCBI Taxonomy" id="398577"/>
    <lineage>
        <taxon>Bacteria</taxon>
        <taxon>Pseudomonadati</taxon>
        <taxon>Pseudomonadota</taxon>
        <taxon>Betaproteobacteria</taxon>
        <taxon>Burkholderiales</taxon>
        <taxon>Burkholderiaceae</taxon>
        <taxon>Burkholderia</taxon>
        <taxon>Burkholderia cepacia complex</taxon>
    </lineage>
</organism>
<keyword id="KW-0066">ATP synthesis</keyword>
<keyword id="KW-0997">Cell inner membrane</keyword>
<keyword id="KW-1003">Cell membrane</keyword>
<keyword id="KW-0139">CF(1)</keyword>
<keyword id="KW-0375">Hydrogen ion transport</keyword>
<keyword id="KW-0406">Ion transport</keyword>
<keyword id="KW-0472">Membrane</keyword>
<keyword id="KW-0813">Transport</keyword>
<sequence length="141" mass="14985">MATIKVDVVSAEEQIFSGEAKFVALPGETGELGILPGHTPLITRIRPGAVRIEVEGGNDEFVFVAGGILEVQPGAVTVLADTAIRGKDLDAAKAEEARKRAEETLQNAKSDLDLAKAQSELATAMAQLEAIQRLAKIRSRH</sequence>
<name>ATPE_BURA4</name>
<feature type="chain" id="PRO_1000127830" description="ATP synthase epsilon chain">
    <location>
        <begin position="1"/>
        <end position="141"/>
    </location>
</feature>
<dbReference type="EMBL" id="CP001025">
    <property type="protein sequence ID" value="ACB62609.1"/>
    <property type="molecule type" value="Genomic_DNA"/>
</dbReference>
<dbReference type="RefSeq" id="WP_006477288.1">
    <property type="nucleotide sequence ID" value="NC_010551.1"/>
</dbReference>
<dbReference type="SMR" id="B1YQL5"/>
<dbReference type="KEGG" id="bac:BamMC406_0107"/>
<dbReference type="HOGENOM" id="CLU_084338_2_0_4"/>
<dbReference type="OrthoDB" id="9791445at2"/>
<dbReference type="Proteomes" id="UP000001680">
    <property type="component" value="Chromosome 1"/>
</dbReference>
<dbReference type="GO" id="GO:0005886">
    <property type="term" value="C:plasma membrane"/>
    <property type="evidence" value="ECO:0007669"/>
    <property type="project" value="UniProtKB-SubCell"/>
</dbReference>
<dbReference type="GO" id="GO:0045259">
    <property type="term" value="C:proton-transporting ATP synthase complex"/>
    <property type="evidence" value="ECO:0007669"/>
    <property type="project" value="UniProtKB-KW"/>
</dbReference>
<dbReference type="GO" id="GO:0005524">
    <property type="term" value="F:ATP binding"/>
    <property type="evidence" value="ECO:0007669"/>
    <property type="project" value="UniProtKB-UniRule"/>
</dbReference>
<dbReference type="GO" id="GO:0046933">
    <property type="term" value="F:proton-transporting ATP synthase activity, rotational mechanism"/>
    <property type="evidence" value="ECO:0007669"/>
    <property type="project" value="UniProtKB-UniRule"/>
</dbReference>
<dbReference type="CDD" id="cd12152">
    <property type="entry name" value="F1-ATPase_delta"/>
    <property type="match status" value="1"/>
</dbReference>
<dbReference type="FunFam" id="2.60.15.10:FF:000001">
    <property type="entry name" value="ATP synthase epsilon chain"/>
    <property type="match status" value="1"/>
</dbReference>
<dbReference type="Gene3D" id="1.20.5.440">
    <property type="entry name" value="ATP synthase delta/epsilon subunit, C-terminal domain"/>
    <property type="match status" value="1"/>
</dbReference>
<dbReference type="Gene3D" id="2.60.15.10">
    <property type="entry name" value="F0F1 ATP synthase delta/epsilon subunit, N-terminal"/>
    <property type="match status" value="1"/>
</dbReference>
<dbReference type="HAMAP" id="MF_00530">
    <property type="entry name" value="ATP_synth_epsil_bac"/>
    <property type="match status" value="1"/>
</dbReference>
<dbReference type="InterPro" id="IPR036794">
    <property type="entry name" value="ATP_F1_dsu/esu_C_sf"/>
</dbReference>
<dbReference type="InterPro" id="IPR001469">
    <property type="entry name" value="ATP_synth_F1_dsu/esu"/>
</dbReference>
<dbReference type="InterPro" id="IPR020546">
    <property type="entry name" value="ATP_synth_F1_dsu/esu_N"/>
</dbReference>
<dbReference type="InterPro" id="IPR020547">
    <property type="entry name" value="ATP_synth_F1_esu_C"/>
</dbReference>
<dbReference type="InterPro" id="IPR036771">
    <property type="entry name" value="ATPsynth_dsu/esu_N"/>
</dbReference>
<dbReference type="NCBIfam" id="TIGR01216">
    <property type="entry name" value="ATP_synt_epsi"/>
    <property type="match status" value="1"/>
</dbReference>
<dbReference type="NCBIfam" id="NF001847">
    <property type="entry name" value="PRK00571.1-4"/>
    <property type="match status" value="1"/>
</dbReference>
<dbReference type="PANTHER" id="PTHR13822">
    <property type="entry name" value="ATP SYNTHASE DELTA/EPSILON CHAIN"/>
    <property type="match status" value="1"/>
</dbReference>
<dbReference type="PANTHER" id="PTHR13822:SF10">
    <property type="entry name" value="ATP SYNTHASE EPSILON CHAIN, CHLOROPLASTIC"/>
    <property type="match status" value="1"/>
</dbReference>
<dbReference type="Pfam" id="PF00401">
    <property type="entry name" value="ATP-synt_DE"/>
    <property type="match status" value="1"/>
</dbReference>
<dbReference type="Pfam" id="PF02823">
    <property type="entry name" value="ATP-synt_DE_N"/>
    <property type="match status" value="1"/>
</dbReference>
<dbReference type="SUPFAM" id="SSF46604">
    <property type="entry name" value="Epsilon subunit of F1F0-ATP synthase C-terminal domain"/>
    <property type="match status" value="1"/>
</dbReference>
<dbReference type="SUPFAM" id="SSF51344">
    <property type="entry name" value="Epsilon subunit of F1F0-ATP synthase N-terminal domain"/>
    <property type="match status" value="1"/>
</dbReference>
<comment type="function">
    <text evidence="1">Produces ATP from ADP in the presence of a proton gradient across the membrane.</text>
</comment>
<comment type="subunit">
    <text evidence="1">F-type ATPases have 2 components, CF(1) - the catalytic core - and CF(0) - the membrane proton channel. CF(1) has five subunits: alpha(3), beta(3), gamma(1), delta(1), epsilon(1). CF(0) has three main subunits: a, b and c.</text>
</comment>
<comment type="subcellular location">
    <subcellularLocation>
        <location evidence="1">Cell inner membrane</location>
        <topology evidence="1">Peripheral membrane protein</topology>
    </subcellularLocation>
</comment>
<comment type="similarity">
    <text evidence="1">Belongs to the ATPase epsilon chain family.</text>
</comment>